<name>RLF9_ARATH</name>
<comment type="function">
    <text evidence="1">Cell signaling peptide that may regulate plant stress, growth, and development. Mediates a rapid alkalinization of extracellular space by mediating a transient increase in the cytoplasmic Ca(2+) concentration leading to a calcium-dependent signaling events through a cell surface receptor and a concomitant activation of some intracellular mitogen-activated protein kinases (By similarity).</text>
</comment>
<comment type="subcellular location">
    <subcellularLocation>
        <location evidence="1">Secreted</location>
    </subcellularLocation>
</comment>
<comment type="similarity">
    <text evidence="3">Belongs to the plant rapid alkalinization factor (RALF) family.</text>
</comment>
<keyword id="KW-1015">Disulfide bond</keyword>
<keyword id="KW-0372">Hormone</keyword>
<keyword id="KW-1185">Reference proteome</keyword>
<keyword id="KW-0964">Secreted</keyword>
<keyword id="KW-0732">Signal</keyword>
<evidence type="ECO:0000250" key="1"/>
<evidence type="ECO:0000255" key="2"/>
<evidence type="ECO:0000305" key="3"/>
<gene>
    <name type="primary">RALFL9</name>
    <name type="ordered locus">At1g61566</name>
    <name type="ORF">T25B24</name>
</gene>
<protein>
    <recommendedName>
        <fullName>Protein RALF-like 9</fullName>
    </recommendedName>
</protein>
<reference key="1">
    <citation type="journal article" date="2000" name="Nature">
        <title>Sequence and analysis of chromosome 1 of the plant Arabidopsis thaliana.</title>
        <authorList>
            <person name="Theologis A."/>
            <person name="Ecker J.R."/>
            <person name="Palm C.J."/>
            <person name="Federspiel N.A."/>
            <person name="Kaul S."/>
            <person name="White O."/>
            <person name="Alonso J."/>
            <person name="Altafi H."/>
            <person name="Araujo R."/>
            <person name="Bowman C.L."/>
            <person name="Brooks S.Y."/>
            <person name="Buehler E."/>
            <person name="Chan A."/>
            <person name="Chao Q."/>
            <person name="Chen H."/>
            <person name="Cheuk R.F."/>
            <person name="Chin C.W."/>
            <person name="Chung M.K."/>
            <person name="Conn L."/>
            <person name="Conway A.B."/>
            <person name="Conway A.R."/>
            <person name="Creasy T.H."/>
            <person name="Dewar K."/>
            <person name="Dunn P."/>
            <person name="Etgu P."/>
            <person name="Feldblyum T.V."/>
            <person name="Feng J.-D."/>
            <person name="Fong B."/>
            <person name="Fujii C.Y."/>
            <person name="Gill J.E."/>
            <person name="Goldsmith A.D."/>
            <person name="Haas B."/>
            <person name="Hansen N.F."/>
            <person name="Hughes B."/>
            <person name="Huizar L."/>
            <person name="Hunter J.L."/>
            <person name="Jenkins J."/>
            <person name="Johnson-Hopson C."/>
            <person name="Khan S."/>
            <person name="Khaykin E."/>
            <person name="Kim C.J."/>
            <person name="Koo H.L."/>
            <person name="Kremenetskaia I."/>
            <person name="Kurtz D.B."/>
            <person name="Kwan A."/>
            <person name="Lam B."/>
            <person name="Langin-Hooper S."/>
            <person name="Lee A."/>
            <person name="Lee J.M."/>
            <person name="Lenz C.A."/>
            <person name="Li J.H."/>
            <person name="Li Y.-P."/>
            <person name="Lin X."/>
            <person name="Liu S.X."/>
            <person name="Liu Z.A."/>
            <person name="Luros J.S."/>
            <person name="Maiti R."/>
            <person name="Marziali A."/>
            <person name="Militscher J."/>
            <person name="Miranda M."/>
            <person name="Nguyen M."/>
            <person name="Nierman W.C."/>
            <person name="Osborne B.I."/>
            <person name="Pai G."/>
            <person name="Peterson J."/>
            <person name="Pham P.K."/>
            <person name="Rizzo M."/>
            <person name="Rooney T."/>
            <person name="Rowley D."/>
            <person name="Sakano H."/>
            <person name="Salzberg S.L."/>
            <person name="Schwartz J.R."/>
            <person name="Shinn P."/>
            <person name="Southwick A.M."/>
            <person name="Sun H."/>
            <person name="Tallon L.J."/>
            <person name="Tambunga G."/>
            <person name="Toriumi M.J."/>
            <person name="Town C.D."/>
            <person name="Utterback T."/>
            <person name="Van Aken S."/>
            <person name="Vaysberg M."/>
            <person name="Vysotskaia V.S."/>
            <person name="Walker M."/>
            <person name="Wu D."/>
            <person name="Yu G."/>
            <person name="Fraser C.M."/>
            <person name="Venter J.C."/>
            <person name="Davis R.W."/>
        </authorList>
    </citation>
    <scope>NUCLEOTIDE SEQUENCE [LARGE SCALE GENOMIC DNA]</scope>
    <source>
        <strain>cv. Columbia</strain>
    </source>
</reference>
<reference key="2">
    <citation type="journal article" date="2017" name="Plant J.">
        <title>Araport11: a complete reannotation of the Arabidopsis thaliana reference genome.</title>
        <authorList>
            <person name="Cheng C.Y."/>
            <person name="Krishnakumar V."/>
            <person name="Chan A.P."/>
            <person name="Thibaud-Nissen F."/>
            <person name="Schobel S."/>
            <person name="Town C.D."/>
        </authorList>
    </citation>
    <scope>GENOME REANNOTATION</scope>
    <source>
        <strain>cv. Columbia</strain>
    </source>
</reference>
<reference key="3">
    <citation type="submission" date="2006-06" db="EMBL/GenBank/DDBJ databases">
        <title>Arabidopsis ORF clones.</title>
        <authorList>
            <person name="Quinitio C."/>
            <person name="Chen H."/>
            <person name="Kim C.J."/>
            <person name="Shinn P."/>
            <person name="Ecker J.R."/>
        </authorList>
    </citation>
    <scope>NUCLEOTIDE SEQUENCE [LARGE SCALE MRNA]</scope>
    <source>
        <strain>cv. Columbia</strain>
    </source>
</reference>
<reference key="4">
    <citation type="submission" date="2002-03" db="EMBL/GenBank/DDBJ databases">
        <title>Full-length cDNA from Arabidopsis thaliana.</title>
        <authorList>
            <person name="Brover V.V."/>
            <person name="Troukhan M.E."/>
            <person name="Alexandrov N.A."/>
            <person name="Lu Y.-P."/>
            <person name="Flavell R.B."/>
            <person name="Feldmann K.A."/>
        </authorList>
    </citation>
    <scope>NUCLEOTIDE SEQUENCE [LARGE SCALE MRNA]</scope>
</reference>
<reference key="5">
    <citation type="journal article" date="2002" name="In Silico Biol.">
        <title>Peptomics, identification of novel cationic Arabidopsis peptides with conserved sequence motifs.</title>
        <authorList>
            <person name="Olsen A.N."/>
            <person name="Mundy J."/>
            <person name="Skriver K."/>
        </authorList>
    </citation>
    <scope>GENE FAMILY</scope>
    <scope>NOMENCLATURE</scope>
</reference>
<sequence>MGMSKSIKVILSLALVVFLALAATKVEATRYITYPAIDRGDHAVHCDKAHPNTCKKKEANPYQRGCEKINRCRGG</sequence>
<accession>Q3ECL0</accession>
<accession>Q8LBS8</accession>
<organism>
    <name type="scientific">Arabidopsis thaliana</name>
    <name type="common">Mouse-ear cress</name>
    <dbReference type="NCBI Taxonomy" id="3702"/>
    <lineage>
        <taxon>Eukaryota</taxon>
        <taxon>Viridiplantae</taxon>
        <taxon>Streptophyta</taxon>
        <taxon>Embryophyta</taxon>
        <taxon>Tracheophyta</taxon>
        <taxon>Spermatophyta</taxon>
        <taxon>Magnoliopsida</taxon>
        <taxon>eudicotyledons</taxon>
        <taxon>Gunneridae</taxon>
        <taxon>Pentapetalae</taxon>
        <taxon>rosids</taxon>
        <taxon>malvids</taxon>
        <taxon>Brassicales</taxon>
        <taxon>Brassicaceae</taxon>
        <taxon>Camelineae</taxon>
        <taxon>Arabidopsis</taxon>
    </lineage>
</organism>
<feature type="signal peptide" evidence="2">
    <location>
        <begin position="1"/>
        <end position="28"/>
    </location>
</feature>
<feature type="chain" id="PRO_0000420300" description="Protein RALF-like 9">
    <location>
        <begin position="29"/>
        <end position="75"/>
    </location>
</feature>
<feature type="disulfide bond" evidence="1">
    <location>
        <begin position="46"/>
        <end position="54"/>
    </location>
</feature>
<feature type="disulfide bond" evidence="1">
    <location>
        <begin position="66"/>
        <end position="72"/>
    </location>
</feature>
<feature type="sequence conflict" description="In Ref. 4; AAM64575." evidence="3" ref="4">
    <original>A</original>
    <variation>G</variation>
    <location>
        <position position="23"/>
    </location>
</feature>
<feature type="sequence conflict" description="In Ref. 4; AAM64575." evidence="3" ref="4">
    <original>E</original>
    <variation>Q</variation>
    <location>
        <position position="58"/>
    </location>
</feature>
<proteinExistence type="inferred from homology"/>
<dbReference type="EMBL" id="AC005850">
    <property type="status" value="NOT_ANNOTATED_CDS"/>
    <property type="molecule type" value="Genomic_DNA"/>
</dbReference>
<dbReference type="EMBL" id="CP002684">
    <property type="protein sequence ID" value="AEE33856.1"/>
    <property type="molecule type" value="Genomic_DNA"/>
</dbReference>
<dbReference type="EMBL" id="BT026021">
    <property type="protein sequence ID" value="ABG25110.1"/>
    <property type="molecule type" value="mRNA"/>
</dbReference>
<dbReference type="EMBL" id="AY087014">
    <property type="protein sequence ID" value="AAM64575.1"/>
    <property type="molecule type" value="mRNA"/>
</dbReference>
<dbReference type="RefSeq" id="NP_564779.1">
    <property type="nucleotide sequence ID" value="NM_104838.2"/>
</dbReference>
<dbReference type="SMR" id="Q3ECL0"/>
<dbReference type="STRING" id="3702.Q3ECL0"/>
<dbReference type="PaxDb" id="3702-AT1G61566.1"/>
<dbReference type="EnsemblPlants" id="AT1G61566.1">
    <property type="protein sequence ID" value="AT1G61566.1"/>
    <property type="gene ID" value="AT1G61566"/>
</dbReference>
<dbReference type="GeneID" id="842452"/>
<dbReference type="Gramene" id="AT1G61566.1">
    <property type="protein sequence ID" value="AT1G61566.1"/>
    <property type="gene ID" value="AT1G61566"/>
</dbReference>
<dbReference type="KEGG" id="ath:AT1G61566"/>
<dbReference type="Araport" id="AT1G61566"/>
<dbReference type="TAIR" id="AT1G61566">
    <property type="gene designation" value="RALFL9"/>
</dbReference>
<dbReference type="eggNOG" id="ENOG502SW1C">
    <property type="taxonomic scope" value="Eukaryota"/>
</dbReference>
<dbReference type="HOGENOM" id="CLU_184731_1_0_1"/>
<dbReference type="InParanoid" id="Q3ECL0"/>
<dbReference type="OMA" id="HATHCDK"/>
<dbReference type="PhylomeDB" id="Q3ECL0"/>
<dbReference type="PRO" id="PR:Q3ECL0"/>
<dbReference type="Proteomes" id="UP000006548">
    <property type="component" value="Chromosome 1"/>
</dbReference>
<dbReference type="ExpressionAtlas" id="Q3ECL0">
    <property type="expression patterns" value="baseline and differential"/>
</dbReference>
<dbReference type="GO" id="GO:0048046">
    <property type="term" value="C:apoplast"/>
    <property type="evidence" value="ECO:0000250"/>
    <property type="project" value="TAIR"/>
</dbReference>
<dbReference type="GO" id="GO:0005179">
    <property type="term" value="F:hormone activity"/>
    <property type="evidence" value="ECO:0000250"/>
    <property type="project" value="UniProtKB"/>
</dbReference>
<dbReference type="GO" id="GO:0019722">
    <property type="term" value="P:calcium-mediated signaling"/>
    <property type="evidence" value="ECO:0000250"/>
    <property type="project" value="UniProtKB"/>
</dbReference>
<dbReference type="GO" id="GO:0007267">
    <property type="term" value="P:cell-cell signaling"/>
    <property type="evidence" value="ECO:0000250"/>
    <property type="project" value="TAIR"/>
</dbReference>
<dbReference type="GO" id="GO:0040008">
    <property type="term" value="P:regulation of growth"/>
    <property type="evidence" value="ECO:0007669"/>
    <property type="project" value="UniProtKB-ARBA"/>
</dbReference>
<dbReference type="InterPro" id="IPR008801">
    <property type="entry name" value="RALF"/>
</dbReference>
<dbReference type="PANTHER" id="PTHR34270">
    <property type="entry name" value="PROTEIN RALF-LIKE 15-RELATED"/>
    <property type="match status" value="1"/>
</dbReference>
<dbReference type="PANTHER" id="PTHR34270:SF12">
    <property type="entry name" value="PROTEIN RALF-LIKE 15-RELATED"/>
    <property type="match status" value="1"/>
</dbReference>
<dbReference type="Pfam" id="PF05498">
    <property type="entry name" value="RALF"/>
    <property type="match status" value="1"/>
</dbReference>